<proteinExistence type="inferred from homology"/>
<organismHost>
    <name type="scientific">Canis lupus familiaris</name>
    <name type="common">Dog</name>
    <name type="synonym">Canis familiaris</name>
    <dbReference type="NCBI Taxonomy" id="9615"/>
</organismHost>
<organism>
    <name type="scientific">Canine adenovirus serotype 1 (strain Glaxo)</name>
    <name type="common">CAdV-1</name>
    <name type="synonym">Canine adenovirus 1 (strain Glaxo)</name>
    <dbReference type="NCBI Taxonomy" id="10513"/>
    <lineage>
        <taxon>Viruses</taxon>
        <taxon>Varidnaviria</taxon>
        <taxon>Bamfordvirae</taxon>
        <taxon>Preplasmiviricota</taxon>
        <taxon>Tectiliviricetes</taxon>
        <taxon>Rowavirales</taxon>
        <taxon>Adenoviridae</taxon>
        <taxon>Mastadenovirus</taxon>
        <taxon>Canine mastadenovirus A</taxon>
    </lineage>
</organism>
<accession>P35982</accession>
<reference key="1">
    <citation type="journal article" date="1989" name="Virus Res.">
        <title>Identification and nucleotide sequence of the early region 1 from canine adenovirus types 1 and 2.</title>
        <authorList>
            <person name="Spibey N."/>
            <person name="McClory R.S."/>
            <person name="Cavanagh H.M.A."/>
        </authorList>
    </citation>
    <scope>NUCLEOTIDE SEQUENCE [GENOMIC DNA]</scope>
</reference>
<protein>
    <recommendedName>
        <fullName>Early E1A protein</fullName>
    </recommendedName>
    <alternativeName>
        <fullName>Early E1A 20 kDa protein</fullName>
    </alternativeName>
</protein>
<keyword id="KW-0010">Activator</keyword>
<keyword id="KW-0244">Early protein</keyword>
<keyword id="KW-1078">G1/S host cell cycle checkpoint dysregulation by virus</keyword>
<keyword id="KW-1048">Host nucleus</keyword>
<keyword id="KW-0945">Host-virus interaction</keyword>
<keyword id="KW-1090">Inhibition of host innate immune response by virus</keyword>
<keyword id="KW-1114">Inhibition of host interferon signaling pathway by virus</keyword>
<keyword id="KW-1105">Inhibition of host STAT1 by virus</keyword>
<keyword id="KW-0922">Interferon antiviral system evasion</keyword>
<keyword id="KW-0479">Metal-binding</keyword>
<keyword id="KW-1121">Modulation of host cell cycle by virus</keyword>
<keyword id="KW-0804">Transcription</keyword>
<keyword id="KW-0805">Transcription regulation</keyword>
<keyword id="KW-0899">Viral immunoevasion</keyword>
<keyword id="KW-0862">Zinc</keyword>
<keyword id="KW-0863">Zinc-finger</keyword>
<name>E1A_ADECG</name>
<sequence length="175" mass="19508">MKLTLEPAPRCLHEYVSQLLEDWQPECLSCEYSHGGSSRPSLHDLFDLELENSRSPSPLLCDWCAEADSESTISTETDVGFTLNTPPVSPLPSYSTSPASIPEDMLLCLEEMPTFDDGDEVRSATTSFESRREKNFDPHVGSFFGCLRCAYYQEQGENSICGLCYLKALAEGKIF</sequence>
<feature type="chain" id="PRO_0000221700" description="Early E1A protein">
    <location>
        <begin position="1"/>
        <end position="175"/>
    </location>
</feature>
<feature type="zinc finger region" evidence="2">
    <location>
        <begin position="146"/>
        <end position="164"/>
    </location>
</feature>
<feature type="region of interest" description="Interaction with RB1 in competition with E2F1" evidence="1">
    <location>
        <begin position="40"/>
        <end position="48"/>
    </location>
</feature>
<feature type="short sequence motif" description="LXCXE motif, interaction with host RB1" evidence="4">
    <location>
        <begin position="106"/>
        <end position="110"/>
    </location>
</feature>
<dbReference type="PIR" id="A60010">
    <property type="entry name" value="A60010"/>
</dbReference>
<dbReference type="GO" id="GO:0042025">
    <property type="term" value="C:host cell nucleus"/>
    <property type="evidence" value="ECO:0007669"/>
    <property type="project" value="UniProtKB-SubCell"/>
</dbReference>
<dbReference type="GO" id="GO:0008270">
    <property type="term" value="F:zinc ion binding"/>
    <property type="evidence" value="ECO:0007669"/>
    <property type="project" value="UniProtKB-KW"/>
</dbReference>
<dbReference type="GO" id="GO:0006355">
    <property type="term" value="P:regulation of DNA-templated transcription"/>
    <property type="evidence" value="ECO:0007669"/>
    <property type="project" value="InterPro"/>
</dbReference>
<dbReference type="GO" id="GO:0039645">
    <property type="term" value="P:symbiont-mediated perturbation of host cell cycle G1/S transition checkpoint"/>
    <property type="evidence" value="ECO:0007669"/>
    <property type="project" value="UniProtKB-KW"/>
</dbReference>
<dbReference type="GO" id="GO:0052170">
    <property type="term" value="P:symbiont-mediated suppression of host innate immune response"/>
    <property type="evidence" value="ECO:0007669"/>
    <property type="project" value="UniProtKB-KW"/>
</dbReference>
<dbReference type="GO" id="GO:0039563">
    <property type="term" value="P:symbiont-mediated suppression of host JAK-STAT cascade via inhibition of STAT1 activity"/>
    <property type="evidence" value="ECO:0007669"/>
    <property type="project" value="UniProtKB-KW"/>
</dbReference>
<dbReference type="GO" id="GO:0039502">
    <property type="term" value="P:symbiont-mediated suppression of host type I interferon-mediated signaling pathway"/>
    <property type="evidence" value="ECO:0007669"/>
    <property type="project" value="UniProtKB-KW"/>
</dbReference>
<dbReference type="InterPro" id="IPR014410">
    <property type="entry name" value="Aden_E1A"/>
</dbReference>
<dbReference type="PIRSF" id="PIRSF003669">
    <property type="entry name" value="Aden_E1A"/>
    <property type="match status" value="1"/>
</dbReference>
<evidence type="ECO:0000250" key="1"/>
<evidence type="ECO:0000250" key="2">
    <source>
        <dbReference type="UniProtKB" id="P03254"/>
    </source>
</evidence>
<evidence type="ECO:0000250" key="3">
    <source>
        <dbReference type="UniProtKB" id="P03255"/>
    </source>
</evidence>
<evidence type="ECO:0000255" key="4"/>
<evidence type="ECO:0000305" key="5"/>
<comment type="function">
    <text evidence="3">Plays a role in viral genome replication by driving entry of quiescent cells into the cell cycle. Stimulation of progression from G1 to S phase allows the virus to efficiently use the cellular DNA replicating machinery to achieve viral genome replication. E1A protein has both transforming and trans-activating activities. Induces the disassembly of the E2F1 transcription factor from RB1 by direct competition for the same binding site on RB1, with subsequent transcriptional activation of E2F1-regulated S-phase genes and of the E2 region of the adenoviral genome. Release of E2F1 leads to the ARF-mediated inhibition of MDM2 and causes TP53/p53 to accumulate because it is not targeted for degradation by MDM2-mediated ubiquitination anymore. This increase in TP53, in turn, would arrest the cell proliferation and direct its death but this effect is counteracted by the viral protein E1B-55K. Inactivation of the ability of RB1 to arrest the cell cycle is critical for cellular transformation, uncontrolled cellular growth and proliferation induced by viral infection. Interaction with RBX1 and CUL1 inhibits ubiquitination of the proteins targeted by SCF(FBXW7) ubiquitin ligase complex, and may be linked to unregulated host cell proliferation. The tumorigenesis-restraining activity of E1A may be related to the disruption of the host CtBP-CtIP complex through the CtBP binding motif.</text>
</comment>
<comment type="subunit">
    <text evidence="2 3">Interacts with host UBE2I; this interaction interferes with polySUMOylation. Interacts with host RB1; this interaction induces the aberrant dissociation of RB1-E2F1 complex thereby disrupting the activity of RB1 and activating E2F1-regulated genes. Interacts with host ATF7; the interaction enhances ATF7-mediated viral transactivation activity which requires the zinc binding domains of both proteins. Isoform early E1A 32 kDa protein and isoform early E1A 26 kDa protein interact (via N-terminus) with CUL1 and E3 ubiquitin ligase RBX1; these interactions inhibit RBX1-CUL1-dependent elongation reaction of ubiquitin chains and attenuate ubiquitination of SCF(FBXW7) target proteins. Interacts (via PXLXP motif) with host ZMYND11/BS69 (via MYND-type zinc finger); this interaction inhibits E1A mediated transactivation. Interacts with host EP300; this interaction stimulates the acetylation of RB1 by recruiting EP300 and RB1 into a multimeric-protein complex. Interacts with host CTBP1 and CTBP2; this interaction seems to potentiate viral replication. Interacts with host DCAF7. Interacts with host DYRK1A. Interacts with host KPNA4; this interaction allows E1A import into the host nucleus. Interacts with host EP400; this interaction stabilizes MYC. Interacts with host TBP protein; this interaction probably disrupts the TBP-TATA complex.</text>
</comment>
<comment type="subcellular location">
    <subcellularLocation>
        <location evidence="3">Host nucleus</location>
    </subcellularLocation>
</comment>
<comment type="similarity">
    <text evidence="5">Belongs to the adenoviridae E1A protein family.</text>
</comment>